<protein>
    <recommendedName>
        <fullName evidence="1">tRNA (guanine-N(1)-)-methyltransferase</fullName>
        <ecNumber evidence="1">2.1.1.228</ecNumber>
    </recommendedName>
    <alternativeName>
        <fullName evidence="1">M1G-methyltransferase</fullName>
    </alternativeName>
    <alternativeName>
        <fullName evidence="1">tRNA [GM37] methyltransferase</fullName>
    </alternativeName>
</protein>
<accession>A0KZM1</accession>
<reference key="1">
    <citation type="submission" date="2006-09" db="EMBL/GenBank/DDBJ databases">
        <title>Complete sequence of chromosome 1 of Shewanella sp. ANA-3.</title>
        <authorList>
            <person name="Copeland A."/>
            <person name="Lucas S."/>
            <person name="Lapidus A."/>
            <person name="Barry K."/>
            <person name="Detter J.C."/>
            <person name="Glavina del Rio T."/>
            <person name="Hammon N."/>
            <person name="Israni S."/>
            <person name="Dalin E."/>
            <person name="Tice H."/>
            <person name="Pitluck S."/>
            <person name="Chertkov O."/>
            <person name="Brettin T."/>
            <person name="Bruce D."/>
            <person name="Han C."/>
            <person name="Tapia R."/>
            <person name="Gilna P."/>
            <person name="Schmutz J."/>
            <person name="Larimer F."/>
            <person name="Land M."/>
            <person name="Hauser L."/>
            <person name="Kyrpides N."/>
            <person name="Kim E."/>
            <person name="Newman D."/>
            <person name="Salticov C."/>
            <person name="Konstantinidis K."/>
            <person name="Klappenback J."/>
            <person name="Tiedje J."/>
            <person name="Richardson P."/>
        </authorList>
    </citation>
    <scope>NUCLEOTIDE SEQUENCE [LARGE SCALE GENOMIC DNA]</scope>
    <source>
        <strain>ANA-3</strain>
    </source>
</reference>
<evidence type="ECO:0000255" key="1">
    <source>
        <dbReference type="HAMAP-Rule" id="MF_00605"/>
    </source>
</evidence>
<gene>
    <name evidence="1" type="primary">trmD</name>
    <name type="ordered locus">Shewana3_3015</name>
</gene>
<sequence>MWLGVITLFPEMFRAVTDFGVTGRAVKNGLLELHTWNPRDFTHDRHSTVDDRPYGGGPGMLMMVQPLRDAIHAAKAAAGEEAKVIYLSPQGRKLDQQGVTELAESSRLILVCGRYEGIDERIIQTEVDEEWSVGDYVLSGGELPAMTLIDAVSRLVPGVLGKQASAEQDSFSDGLLDCPHYTRPESLDGLDVPAVLLSGNHEQIRLWRLQQSLGRTFLRRPELFENLALTDEQSTLLAQFVEAMDKNA</sequence>
<feature type="chain" id="PRO_1000006519" description="tRNA (guanine-N(1)-)-methyltransferase">
    <location>
        <begin position="1"/>
        <end position="248"/>
    </location>
</feature>
<feature type="binding site" evidence="1">
    <location>
        <position position="113"/>
    </location>
    <ligand>
        <name>S-adenosyl-L-methionine</name>
        <dbReference type="ChEBI" id="CHEBI:59789"/>
    </ligand>
</feature>
<feature type="binding site" evidence="1">
    <location>
        <begin position="133"/>
        <end position="138"/>
    </location>
    <ligand>
        <name>S-adenosyl-L-methionine</name>
        <dbReference type="ChEBI" id="CHEBI:59789"/>
    </ligand>
</feature>
<organism>
    <name type="scientific">Shewanella sp. (strain ANA-3)</name>
    <dbReference type="NCBI Taxonomy" id="94122"/>
    <lineage>
        <taxon>Bacteria</taxon>
        <taxon>Pseudomonadati</taxon>
        <taxon>Pseudomonadota</taxon>
        <taxon>Gammaproteobacteria</taxon>
        <taxon>Alteromonadales</taxon>
        <taxon>Shewanellaceae</taxon>
        <taxon>Shewanella</taxon>
    </lineage>
</organism>
<comment type="function">
    <text evidence="1">Specifically methylates guanosine-37 in various tRNAs.</text>
</comment>
<comment type="catalytic activity">
    <reaction evidence="1">
        <text>guanosine(37) in tRNA + S-adenosyl-L-methionine = N(1)-methylguanosine(37) in tRNA + S-adenosyl-L-homocysteine + H(+)</text>
        <dbReference type="Rhea" id="RHEA:36899"/>
        <dbReference type="Rhea" id="RHEA-COMP:10145"/>
        <dbReference type="Rhea" id="RHEA-COMP:10147"/>
        <dbReference type="ChEBI" id="CHEBI:15378"/>
        <dbReference type="ChEBI" id="CHEBI:57856"/>
        <dbReference type="ChEBI" id="CHEBI:59789"/>
        <dbReference type="ChEBI" id="CHEBI:73542"/>
        <dbReference type="ChEBI" id="CHEBI:74269"/>
        <dbReference type="EC" id="2.1.1.228"/>
    </reaction>
</comment>
<comment type="subunit">
    <text evidence="1">Homodimer.</text>
</comment>
<comment type="subcellular location">
    <subcellularLocation>
        <location evidence="1">Cytoplasm</location>
    </subcellularLocation>
</comment>
<comment type="similarity">
    <text evidence="1">Belongs to the RNA methyltransferase TrmD family.</text>
</comment>
<keyword id="KW-0963">Cytoplasm</keyword>
<keyword id="KW-0489">Methyltransferase</keyword>
<keyword id="KW-0949">S-adenosyl-L-methionine</keyword>
<keyword id="KW-0808">Transferase</keyword>
<keyword id="KW-0819">tRNA processing</keyword>
<proteinExistence type="inferred from homology"/>
<name>TRMD_SHESA</name>
<dbReference type="EC" id="2.1.1.228" evidence="1"/>
<dbReference type="EMBL" id="CP000469">
    <property type="protein sequence ID" value="ABK49240.1"/>
    <property type="molecule type" value="Genomic_DNA"/>
</dbReference>
<dbReference type="RefSeq" id="WP_011623586.1">
    <property type="nucleotide sequence ID" value="NC_008577.1"/>
</dbReference>
<dbReference type="SMR" id="A0KZM1"/>
<dbReference type="STRING" id="94122.Shewana3_3015"/>
<dbReference type="GeneID" id="75189673"/>
<dbReference type="KEGG" id="shn:Shewana3_3015"/>
<dbReference type="eggNOG" id="COG0336">
    <property type="taxonomic scope" value="Bacteria"/>
</dbReference>
<dbReference type="HOGENOM" id="CLU_047363_0_1_6"/>
<dbReference type="OrthoDB" id="9807416at2"/>
<dbReference type="Proteomes" id="UP000002589">
    <property type="component" value="Chromosome"/>
</dbReference>
<dbReference type="GO" id="GO:0005829">
    <property type="term" value="C:cytosol"/>
    <property type="evidence" value="ECO:0007669"/>
    <property type="project" value="TreeGrafter"/>
</dbReference>
<dbReference type="GO" id="GO:0052906">
    <property type="term" value="F:tRNA (guanine(37)-N1)-methyltransferase activity"/>
    <property type="evidence" value="ECO:0007669"/>
    <property type="project" value="UniProtKB-UniRule"/>
</dbReference>
<dbReference type="GO" id="GO:0002939">
    <property type="term" value="P:tRNA N1-guanine methylation"/>
    <property type="evidence" value="ECO:0007669"/>
    <property type="project" value="TreeGrafter"/>
</dbReference>
<dbReference type="CDD" id="cd18080">
    <property type="entry name" value="TrmD-like"/>
    <property type="match status" value="1"/>
</dbReference>
<dbReference type="FunFam" id="1.10.1270.20:FF:000001">
    <property type="entry name" value="tRNA (guanine-N(1)-)-methyltransferase"/>
    <property type="match status" value="1"/>
</dbReference>
<dbReference type="FunFam" id="3.40.1280.10:FF:000001">
    <property type="entry name" value="tRNA (guanine-N(1)-)-methyltransferase"/>
    <property type="match status" value="1"/>
</dbReference>
<dbReference type="Gene3D" id="3.40.1280.10">
    <property type="match status" value="1"/>
</dbReference>
<dbReference type="Gene3D" id="1.10.1270.20">
    <property type="entry name" value="tRNA(m1g37)methyltransferase, domain 2"/>
    <property type="match status" value="1"/>
</dbReference>
<dbReference type="HAMAP" id="MF_00605">
    <property type="entry name" value="TrmD"/>
    <property type="match status" value="1"/>
</dbReference>
<dbReference type="InterPro" id="IPR029028">
    <property type="entry name" value="Alpha/beta_knot_MTases"/>
</dbReference>
<dbReference type="InterPro" id="IPR023148">
    <property type="entry name" value="tRNA_m1G_MeTrfase_C_sf"/>
</dbReference>
<dbReference type="InterPro" id="IPR002649">
    <property type="entry name" value="tRNA_m1G_MeTrfase_TrmD"/>
</dbReference>
<dbReference type="InterPro" id="IPR029026">
    <property type="entry name" value="tRNA_m1G_MTases_N"/>
</dbReference>
<dbReference type="InterPro" id="IPR016009">
    <property type="entry name" value="tRNA_MeTrfase_TRMD/TRM10"/>
</dbReference>
<dbReference type="NCBIfam" id="NF000648">
    <property type="entry name" value="PRK00026.1"/>
    <property type="match status" value="1"/>
</dbReference>
<dbReference type="NCBIfam" id="TIGR00088">
    <property type="entry name" value="trmD"/>
    <property type="match status" value="1"/>
</dbReference>
<dbReference type="PANTHER" id="PTHR46417">
    <property type="entry name" value="TRNA (GUANINE-N(1)-)-METHYLTRANSFERASE"/>
    <property type="match status" value="1"/>
</dbReference>
<dbReference type="PANTHER" id="PTHR46417:SF1">
    <property type="entry name" value="TRNA (GUANINE-N(1)-)-METHYLTRANSFERASE"/>
    <property type="match status" value="1"/>
</dbReference>
<dbReference type="Pfam" id="PF01746">
    <property type="entry name" value="tRNA_m1G_MT"/>
    <property type="match status" value="1"/>
</dbReference>
<dbReference type="PIRSF" id="PIRSF000386">
    <property type="entry name" value="tRNA_mtase"/>
    <property type="match status" value="1"/>
</dbReference>
<dbReference type="SUPFAM" id="SSF75217">
    <property type="entry name" value="alpha/beta knot"/>
    <property type="match status" value="1"/>
</dbReference>